<feature type="chain" id="PRO_1000046221" description="Large ribosomal subunit protein uL11">
    <location>
        <begin position="1"/>
        <end position="142"/>
    </location>
</feature>
<reference key="1">
    <citation type="submission" date="2007-02" db="EMBL/GenBank/DDBJ databases">
        <title>Complete sequence of Mycobacterium sp. JLS.</title>
        <authorList>
            <consortium name="US DOE Joint Genome Institute"/>
            <person name="Copeland A."/>
            <person name="Lucas S."/>
            <person name="Lapidus A."/>
            <person name="Barry K."/>
            <person name="Detter J.C."/>
            <person name="Glavina del Rio T."/>
            <person name="Hammon N."/>
            <person name="Israni S."/>
            <person name="Dalin E."/>
            <person name="Tice H."/>
            <person name="Pitluck S."/>
            <person name="Chain P."/>
            <person name="Malfatti S."/>
            <person name="Shin M."/>
            <person name="Vergez L."/>
            <person name="Schmutz J."/>
            <person name="Larimer F."/>
            <person name="Land M."/>
            <person name="Hauser L."/>
            <person name="Kyrpides N."/>
            <person name="Mikhailova N."/>
            <person name="Miller C.D."/>
            <person name="Anderson A.J."/>
            <person name="Sims R.C."/>
            <person name="Richardson P."/>
        </authorList>
    </citation>
    <scope>NUCLEOTIDE SEQUENCE [LARGE SCALE GENOMIC DNA]</scope>
    <source>
        <strain>JLS</strain>
    </source>
</reference>
<keyword id="KW-0488">Methylation</keyword>
<keyword id="KW-0687">Ribonucleoprotein</keyword>
<keyword id="KW-0689">Ribosomal protein</keyword>
<keyword id="KW-0694">RNA-binding</keyword>
<keyword id="KW-0699">rRNA-binding</keyword>
<comment type="function">
    <text evidence="1">Forms part of the ribosomal stalk which helps the ribosome interact with GTP-bound translation factors.</text>
</comment>
<comment type="subunit">
    <text evidence="1">Part of the ribosomal stalk of the 50S ribosomal subunit. Interacts with L10 and the large rRNA to form the base of the stalk. L10 forms an elongated spine to which L12 dimers bind in a sequential fashion forming a multimeric L10(L12)X complex.</text>
</comment>
<comment type="PTM">
    <text evidence="1">One or more lysine residues are methylated.</text>
</comment>
<comment type="similarity">
    <text evidence="1">Belongs to the universal ribosomal protein uL11 family.</text>
</comment>
<sequence length="142" mass="15074">MAPKKKVTGLIKLQIQAGQANPAPPVGPALGQHGVNIMEFCKAYNAATESQRGNVIPVEITVYEDRSFTFALKTPPAAKLLLKAAGVPKGSGEPHKTKVAKVTWDQVREIAETKKSDLNANDIDQAAKIIAGTARSMGITVE</sequence>
<name>RL11_MYCSJ</name>
<evidence type="ECO:0000255" key="1">
    <source>
        <dbReference type="HAMAP-Rule" id="MF_00736"/>
    </source>
</evidence>
<evidence type="ECO:0000305" key="2"/>
<protein>
    <recommendedName>
        <fullName evidence="1">Large ribosomal subunit protein uL11</fullName>
    </recommendedName>
    <alternativeName>
        <fullName evidence="2">50S ribosomal protein L11</fullName>
    </alternativeName>
</protein>
<gene>
    <name evidence="1" type="primary">rplK</name>
    <name type="ordered locus">Mjls_0951</name>
</gene>
<dbReference type="EMBL" id="CP000580">
    <property type="protein sequence ID" value="ABN96760.1"/>
    <property type="molecule type" value="Genomic_DNA"/>
</dbReference>
<dbReference type="SMR" id="A3PV33"/>
<dbReference type="KEGG" id="mjl:Mjls_0951"/>
<dbReference type="HOGENOM" id="CLU_074237_2_1_11"/>
<dbReference type="BioCyc" id="MSP164757:G1G8C-964-MONOMER"/>
<dbReference type="GO" id="GO:0022625">
    <property type="term" value="C:cytosolic large ribosomal subunit"/>
    <property type="evidence" value="ECO:0007669"/>
    <property type="project" value="TreeGrafter"/>
</dbReference>
<dbReference type="GO" id="GO:0070180">
    <property type="term" value="F:large ribosomal subunit rRNA binding"/>
    <property type="evidence" value="ECO:0007669"/>
    <property type="project" value="UniProtKB-UniRule"/>
</dbReference>
<dbReference type="GO" id="GO:0003735">
    <property type="term" value="F:structural constituent of ribosome"/>
    <property type="evidence" value="ECO:0007669"/>
    <property type="project" value="InterPro"/>
</dbReference>
<dbReference type="GO" id="GO:0006412">
    <property type="term" value="P:translation"/>
    <property type="evidence" value="ECO:0007669"/>
    <property type="project" value="UniProtKB-UniRule"/>
</dbReference>
<dbReference type="CDD" id="cd00349">
    <property type="entry name" value="Ribosomal_L11"/>
    <property type="match status" value="1"/>
</dbReference>
<dbReference type="FunFam" id="1.10.10.250:FF:000001">
    <property type="entry name" value="50S ribosomal protein L11"/>
    <property type="match status" value="1"/>
</dbReference>
<dbReference type="FunFam" id="3.30.1550.10:FF:000001">
    <property type="entry name" value="50S ribosomal protein L11"/>
    <property type="match status" value="1"/>
</dbReference>
<dbReference type="Gene3D" id="1.10.10.250">
    <property type="entry name" value="Ribosomal protein L11, C-terminal domain"/>
    <property type="match status" value="1"/>
</dbReference>
<dbReference type="Gene3D" id="3.30.1550.10">
    <property type="entry name" value="Ribosomal protein L11/L12, N-terminal domain"/>
    <property type="match status" value="1"/>
</dbReference>
<dbReference type="HAMAP" id="MF_00736">
    <property type="entry name" value="Ribosomal_uL11"/>
    <property type="match status" value="1"/>
</dbReference>
<dbReference type="InterPro" id="IPR000911">
    <property type="entry name" value="Ribosomal_uL11"/>
</dbReference>
<dbReference type="InterPro" id="IPR006519">
    <property type="entry name" value="Ribosomal_uL11_bac-typ"/>
</dbReference>
<dbReference type="InterPro" id="IPR020783">
    <property type="entry name" value="Ribosomal_uL11_C"/>
</dbReference>
<dbReference type="InterPro" id="IPR036769">
    <property type="entry name" value="Ribosomal_uL11_C_sf"/>
</dbReference>
<dbReference type="InterPro" id="IPR020785">
    <property type="entry name" value="Ribosomal_uL11_CS"/>
</dbReference>
<dbReference type="InterPro" id="IPR020784">
    <property type="entry name" value="Ribosomal_uL11_N"/>
</dbReference>
<dbReference type="InterPro" id="IPR036796">
    <property type="entry name" value="Ribosomal_uL11_N_sf"/>
</dbReference>
<dbReference type="NCBIfam" id="TIGR01632">
    <property type="entry name" value="L11_bact"/>
    <property type="match status" value="1"/>
</dbReference>
<dbReference type="PANTHER" id="PTHR11661">
    <property type="entry name" value="60S RIBOSOMAL PROTEIN L12"/>
    <property type="match status" value="1"/>
</dbReference>
<dbReference type="PANTHER" id="PTHR11661:SF1">
    <property type="entry name" value="LARGE RIBOSOMAL SUBUNIT PROTEIN UL11M"/>
    <property type="match status" value="1"/>
</dbReference>
<dbReference type="Pfam" id="PF00298">
    <property type="entry name" value="Ribosomal_L11"/>
    <property type="match status" value="1"/>
</dbReference>
<dbReference type="Pfam" id="PF03946">
    <property type="entry name" value="Ribosomal_L11_N"/>
    <property type="match status" value="1"/>
</dbReference>
<dbReference type="SMART" id="SM00649">
    <property type="entry name" value="RL11"/>
    <property type="match status" value="1"/>
</dbReference>
<dbReference type="SUPFAM" id="SSF54747">
    <property type="entry name" value="Ribosomal L11/L12e N-terminal domain"/>
    <property type="match status" value="1"/>
</dbReference>
<dbReference type="SUPFAM" id="SSF46906">
    <property type="entry name" value="Ribosomal protein L11, C-terminal domain"/>
    <property type="match status" value="1"/>
</dbReference>
<dbReference type="PROSITE" id="PS00359">
    <property type="entry name" value="RIBOSOMAL_L11"/>
    <property type="match status" value="1"/>
</dbReference>
<organism>
    <name type="scientific">Mycobacterium sp. (strain JLS)</name>
    <dbReference type="NCBI Taxonomy" id="164757"/>
    <lineage>
        <taxon>Bacteria</taxon>
        <taxon>Bacillati</taxon>
        <taxon>Actinomycetota</taxon>
        <taxon>Actinomycetes</taxon>
        <taxon>Mycobacteriales</taxon>
        <taxon>Mycobacteriaceae</taxon>
        <taxon>Mycobacterium</taxon>
    </lineage>
</organism>
<proteinExistence type="inferred from homology"/>
<accession>A3PV33</accession>